<accession>Q15Q28</accession>
<keyword id="KW-0413">Isomerase</keyword>
<name>RPIA_PSEA6</name>
<organism>
    <name type="scientific">Pseudoalteromonas atlantica (strain T6c / ATCC BAA-1087)</name>
    <dbReference type="NCBI Taxonomy" id="3042615"/>
    <lineage>
        <taxon>Bacteria</taxon>
        <taxon>Pseudomonadati</taxon>
        <taxon>Pseudomonadota</taxon>
        <taxon>Gammaproteobacteria</taxon>
        <taxon>Alteromonadales</taxon>
        <taxon>Alteromonadaceae</taxon>
        <taxon>Paraglaciecola</taxon>
    </lineage>
</organism>
<dbReference type="EC" id="5.3.1.6" evidence="1"/>
<dbReference type="EMBL" id="CP000388">
    <property type="protein sequence ID" value="ABG42010.1"/>
    <property type="molecule type" value="Genomic_DNA"/>
</dbReference>
<dbReference type="RefSeq" id="WP_011576238.1">
    <property type="nucleotide sequence ID" value="NC_008228.1"/>
</dbReference>
<dbReference type="SMR" id="Q15Q28"/>
<dbReference type="STRING" id="342610.Patl_3508"/>
<dbReference type="KEGG" id="pat:Patl_3508"/>
<dbReference type="eggNOG" id="COG0120">
    <property type="taxonomic scope" value="Bacteria"/>
</dbReference>
<dbReference type="HOGENOM" id="CLU_056590_1_1_6"/>
<dbReference type="OrthoDB" id="5870696at2"/>
<dbReference type="UniPathway" id="UPA00115">
    <property type="reaction ID" value="UER00412"/>
</dbReference>
<dbReference type="Proteomes" id="UP000001981">
    <property type="component" value="Chromosome"/>
</dbReference>
<dbReference type="GO" id="GO:0005829">
    <property type="term" value="C:cytosol"/>
    <property type="evidence" value="ECO:0007669"/>
    <property type="project" value="TreeGrafter"/>
</dbReference>
<dbReference type="GO" id="GO:0004751">
    <property type="term" value="F:ribose-5-phosphate isomerase activity"/>
    <property type="evidence" value="ECO:0007669"/>
    <property type="project" value="UniProtKB-UniRule"/>
</dbReference>
<dbReference type="GO" id="GO:0006014">
    <property type="term" value="P:D-ribose metabolic process"/>
    <property type="evidence" value="ECO:0007669"/>
    <property type="project" value="TreeGrafter"/>
</dbReference>
<dbReference type="GO" id="GO:0009052">
    <property type="term" value="P:pentose-phosphate shunt, non-oxidative branch"/>
    <property type="evidence" value="ECO:0007669"/>
    <property type="project" value="UniProtKB-UniRule"/>
</dbReference>
<dbReference type="CDD" id="cd01398">
    <property type="entry name" value="RPI_A"/>
    <property type="match status" value="1"/>
</dbReference>
<dbReference type="FunFam" id="3.30.70.260:FF:000004">
    <property type="entry name" value="Ribose-5-phosphate isomerase A"/>
    <property type="match status" value="1"/>
</dbReference>
<dbReference type="FunFam" id="3.40.50.1360:FF:000001">
    <property type="entry name" value="Ribose-5-phosphate isomerase A"/>
    <property type="match status" value="1"/>
</dbReference>
<dbReference type="Gene3D" id="3.30.70.260">
    <property type="match status" value="1"/>
</dbReference>
<dbReference type="Gene3D" id="3.40.50.1360">
    <property type="match status" value="1"/>
</dbReference>
<dbReference type="HAMAP" id="MF_00170">
    <property type="entry name" value="Rib_5P_isom_A"/>
    <property type="match status" value="1"/>
</dbReference>
<dbReference type="InterPro" id="IPR037171">
    <property type="entry name" value="NagB/RpiA_transferase-like"/>
</dbReference>
<dbReference type="InterPro" id="IPR020672">
    <property type="entry name" value="Ribose5P_isomerase_typA_subgr"/>
</dbReference>
<dbReference type="InterPro" id="IPR004788">
    <property type="entry name" value="Ribose5P_isomerase_type_A"/>
</dbReference>
<dbReference type="NCBIfam" id="NF001924">
    <property type="entry name" value="PRK00702.1"/>
    <property type="match status" value="1"/>
</dbReference>
<dbReference type="NCBIfam" id="TIGR00021">
    <property type="entry name" value="rpiA"/>
    <property type="match status" value="1"/>
</dbReference>
<dbReference type="PANTHER" id="PTHR11934">
    <property type="entry name" value="RIBOSE-5-PHOSPHATE ISOMERASE"/>
    <property type="match status" value="1"/>
</dbReference>
<dbReference type="PANTHER" id="PTHR11934:SF0">
    <property type="entry name" value="RIBOSE-5-PHOSPHATE ISOMERASE"/>
    <property type="match status" value="1"/>
</dbReference>
<dbReference type="Pfam" id="PF06026">
    <property type="entry name" value="Rib_5-P_isom_A"/>
    <property type="match status" value="1"/>
</dbReference>
<dbReference type="SUPFAM" id="SSF75445">
    <property type="entry name" value="D-ribose-5-phosphate isomerase (RpiA), lid domain"/>
    <property type="match status" value="1"/>
</dbReference>
<dbReference type="SUPFAM" id="SSF100950">
    <property type="entry name" value="NagB/RpiA/CoA transferase-like"/>
    <property type="match status" value="1"/>
</dbReference>
<reference key="1">
    <citation type="submission" date="2006-06" db="EMBL/GenBank/DDBJ databases">
        <title>Complete sequence of Pseudoalteromonas atlantica T6c.</title>
        <authorList>
            <consortium name="US DOE Joint Genome Institute"/>
            <person name="Copeland A."/>
            <person name="Lucas S."/>
            <person name="Lapidus A."/>
            <person name="Barry K."/>
            <person name="Detter J.C."/>
            <person name="Glavina del Rio T."/>
            <person name="Hammon N."/>
            <person name="Israni S."/>
            <person name="Dalin E."/>
            <person name="Tice H."/>
            <person name="Pitluck S."/>
            <person name="Saunders E."/>
            <person name="Brettin T."/>
            <person name="Bruce D."/>
            <person name="Han C."/>
            <person name="Tapia R."/>
            <person name="Gilna P."/>
            <person name="Schmutz J."/>
            <person name="Larimer F."/>
            <person name="Land M."/>
            <person name="Hauser L."/>
            <person name="Kyrpides N."/>
            <person name="Kim E."/>
            <person name="Karls A.C."/>
            <person name="Bartlett D."/>
            <person name="Higgins B.P."/>
            <person name="Richardson P."/>
        </authorList>
    </citation>
    <scope>NUCLEOTIDE SEQUENCE [LARGE SCALE GENOMIC DNA]</scope>
    <source>
        <strain>T6c / ATCC BAA-1087</strain>
    </source>
</reference>
<comment type="function">
    <text evidence="1">Catalyzes the reversible conversion of ribose-5-phosphate to ribulose 5-phosphate.</text>
</comment>
<comment type="catalytic activity">
    <reaction evidence="1">
        <text>aldehydo-D-ribose 5-phosphate = D-ribulose 5-phosphate</text>
        <dbReference type="Rhea" id="RHEA:14657"/>
        <dbReference type="ChEBI" id="CHEBI:58121"/>
        <dbReference type="ChEBI" id="CHEBI:58273"/>
        <dbReference type="EC" id="5.3.1.6"/>
    </reaction>
</comment>
<comment type="pathway">
    <text evidence="1">Carbohydrate degradation; pentose phosphate pathway; D-ribose 5-phosphate from D-ribulose 5-phosphate (non-oxidative stage): step 1/1.</text>
</comment>
<comment type="subunit">
    <text evidence="1">Homodimer.</text>
</comment>
<comment type="similarity">
    <text evidence="1">Belongs to the ribose 5-phosphate isomerase family.</text>
</comment>
<evidence type="ECO:0000255" key="1">
    <source>
        <dbReference type="HAMAP-Rule" id="MF_00170"/>
    </source>
</evidence>
<gene>
    <name evidence="1" type="primary">rpiA</name>
    <name type="ordered locus">Patl_3508</name>
</gene>
<protein>
    <recommendedName>
        <fullName evidence="1">Ribose-5-phosphate isomerase A</fullName>
        <ecNumber evidence="1">5.3.1.6</ecNumber>
    </recommendedName>
    <alternativeName>
        <fullName evidence="1">Phosphoriboisomerase A</fullName>
        <shortName evidence="1">PRI</shortName>
    </alternativeName>
</protein>
<proteinExistence type="inferred from homology"/>
<sequence>MNQDDKKKAVAQAAVRYVEQDSIIGVGTGSTVNYFIEALAPIKNDIVGAVSSSEASTERLTALGIEVFDLNSVDQLSVYVDGADEITEHRHMIKGGGAALTREKIVAAVAQKFVCIIDDTKNVGVLGAFPLPVEVIPMARSYVAREIVKLGGDPVYRQGVVTDNGNVILDVHNLKILNPVELERQLNNIVGVVTNGLFAARGADVVLTGSESGVQVNE</sequence>
<feature type="chain" id="PRO_1000016961" description="Ribose-5-phosphate isomerase A">
    <location>
        <begin position="1"/>
        <end position="218"/>
    </location>
</feature>
<feature type="active site" description="Proton acceptor" evidence="1">
    <location>
        <position position="103"/>
    </location>
</feature>
<feature type="binding site" evidence="1">
    <location>
        <begin position="28"/>
        <end position="31"/>
    </location>
    <ligand>
        <name>substrate</name>
    </ligand>
</feature>
<feature type="binding site" evidence="1">
    <location>
        <begin position="81"/>
        <end position="84"/>
    </location>
    <ligand>
        <name>substrate</name>
    </ligand>
</feature>
<feature type="binding site" evidence="1">
    <location>
        <begin position="94"/>
        <end position="97"/>
    </location>
    <ligand>
        <name>substrate</name>
    </ligand>
</feature>
<feature type="binding site" evidence="1">
    <location>
        <position position="121"/>
    </location>
    <ligand>
        <name>substrate</name>
    </ligand>
</feature>